<reference evidence="12" key="1">
    <citation type="journal article" date="2000" name="Science">
        <title>The genome sequence of Drosophila melanogaster.</title>
        <authorList>
            <person name="Adams M.D."/>
            <person name="Celniker S.E."/>
            <person name="Holt R.A."/>
            <person name="Evans C.A."/>
            <person name="Gocayne J.D."/>
            <person name="Amanatides P.G."/>
            <person name="Scherer S.E."/>
            <person name="Li P.W."/>
            <person name="Hoskins R.A."/>
            <person name="Galle R.F."/>
            <person name="George R.A."/>
            <person name="Lewis S.E."/>
            <person name="Richards S."/>
            <person name="Ashburner M."/>
            <person name="Henderson S.N."/>
            <person name="Sutton G.G."/>
            <person name="Wortman J.R."/>
            <person name="Yandell M.D."/>
            <person name="Zhang Q."/>
            <person name="Chen L.X."/>
            <person name="Brandon R.C."/>
            <person name="Rogers Y.-H.C."/>
            <person name="Blazej R.G."/>
            <person name="Champe M."/>
            <person name="Pfeiffer B.D."/>
            <person name="Wan K.H."/>
            <person name="Doyle C."/>
            <person name="Baxter E.G."/>
            <person name="Helt G."/>
            <person name="Nelson C.R."/>
            <person name="Miklos G.L.G."/>
            <person name="Abril J.F."/>
            <person name="Agbayani A."/>
            <person name="An H.-J."/>
            <person name="Andrews-Pfannkoch C."/>
            <person name="Baldwin D."/>
            <person name="Ballew R.M."/>
            <person name="Basu A."/>
            <person name="Baxendale J."/>
            <person name="Bayraktaroglu L."/>
            <person name="Beasley E.M."/>
            <person name="Beeson K.Y."/>
            <person name="Benos P.V."/>
            <person name="Berman B.P."/>
            <person name="Bhandari D."/>
            <person name="Bolshakov S."/>
            <person name="Borkova D."/>
            <person name="Botchan M.R."/>
            <person name="Bouck J."/>
            <person name="Brokstein P."/>
            <person name="Brottier P."/>
            <person name="Burtis K.C."/>
            <person name="Busam D.A."/>
            <person name="Butler H."/>
            <person name="Cadieu E."/>
            <person name="Center A."/>
            <person name="Chandra I."/>
            <person name="Cherry J.M."/>
            <person name="Cawley S."/>
            <person name="Dahlke C."/>
            <person name="Davenport L.B."/>
            <person name="Davies P."/>
            <person name="de Pablos B."/>
            <person name="Delcher A."/>
            <person name="Deng Z."/>
            <person name="Mays A.D."/>
            <person name="Dew I."/>
            <person name="Dietz S.M."/>
            <person name="Dodson K."/>
            <person name="Doup L.E."/>
            <person name="Downes M."/>
            <person name="Dugan-Rocha S."/>
            <person name="Dunkov B.C."/>
            <person name="Dunn P."/>
            <person name="Durbin K.J."/>
            <person name="Evangelista C.C."/>
            <person name="Ferraz C."/>
            <person name="Ferriera S."/>
            <person name="Fleischmann W."/>
            <person name="Fosler C."/>
            <person name="Gabrielian A.E."/>
            <person name="Garg N.S."/>
            <person name="Gelbart W.M."/>
            <person name="Glasser K."/>
            <person name="Glodek A."/>
            <person name="Gong F."/>
            <person name="Gorrell J.H."/>
            <person name="Gu Z."/>
            <person name="Guan P."/>
            <person name="Harris M."/>
            <person name="Harris N.L."/>
            <person name="Harvey D.A."/>
            <person name="Heiman T.J."/>
            <person name="Hernandez J.R."/>
            <person name="Houck J."/>
            <person name="Hostin D."/>
            <person name="Houston K.A."/>
            <person name="Howland T.J."/>
            <person name="Wei M.-H."/>
            <person name="Ibegwam C."/>
            <person name="Jalali M."/>
            <person name="Kalush F."/>
            <person name="Karpen G.H."/>
            <person name="Ke Z."/>
            <person name="Kennison J.A."/>
            <person name="Ketchum K.A."/>
            <person name="Kimmel B.E."/>
            <person name="Kodira C.D."/>
            <person name="Kraft C.L."/>
            <person name="Kravitz S."/>
            <person name="Kulp D."/>
            <person name="Lai Z."/>
            <person name="Lasko P."/>
            <person name="Lei Y."/>
            <person name="Levitsky A.A."/>
            <person name="Li J.H."/>
            <person name="Li Z."/>
            <person name="Liang Y."/>
            <person name="Lin X."/>
            <person name="Liu X."/>
            <person name="Mattei B."/>
            <person name="McIntosh T.C."/>
            <person name="McLeod M.P."/>
            <person name="McPherson D."/>
            <person name="Merkulov G."/>
            <person name="Milshina N.V."/>
            <person name="Mobarry C."/>
            <person name="Morris J."/>
            <person name="Moshrefi A."/>
            <person name="Mount S.M."/>
            <person name="Moy M."/>
            <person name="Murphy B."/>
            <person name="Murphy L."/>
            <person name="Muzny D.M."/>
            <person name="Nelson D.L."/>
            <person name="Nelson D.R."/>
            <person name="Nelson K.A."/>
            <person name="Nixon K."/>
            <person name="Nusskern D.R."/>
            <person name="Pacleb J.M."/>
            <person name="Palazzolo M."/>
            <person name="Pittman G.S."/>
            <person name="Pan S."/>
            <person name="Pollard J."/>
            <person name="Puri V."/>
            <person name="Reese M.G."/>
            <person name="Reinert K."/>
            <person name="Remington K."/>
            <person name="Saunders R.D.C."/>
            <person name="Scheeler F."/>
            <person name="Shen H."/>
            <person name="Shue B.C."/>
            <person name="Siden-Kiamos I."/>
            <person name="Simpson M."/>
            <person name="Skupski M.P."/>
            <person name="Smith T.J."/>
            <person name="Spier E."/>
            <person name="Spradling A.C."/>
            <person name="Stapleton M."/>
            <person name="Strong R."/>
            <person name="Sun E."/>
            <person name="Svirskas R."/>
            <person name="Tector C."/>
            <person name="Turner R."/>
            <person name="Venter E."/>
            <person name="Wang A.H."/>
            <person name="Wang X."/>
            <person name="Wang Z.-Y."/>
            <person name="Wassarman D.A."/>
            <person name="Weinstock G.M."/>
            <person name="Weissenbach J."/>
            <person name="Williams S.M."/>
            <person name="Woodage T."/>
            <person name="Worley K.C."/>
            <person name="Wu D."/>
            <person name="Yang S."/>
            <person name="Yao Q.A."/>
            <person name="Ye J."/>
            <person name="Yeh R.-F."/>
            <person name="Zaveri J.S."/>
            <person name="Zhan M."/>
            <person name="Zhang G."/>
            <person name="Zhao Q."/>
            <person name="Zheng L."/>
            <person name="Zheng X.H."/>
            <person name="Zhong F.N."/>
            <person name="Zhong W."/>
            <person name="Zhou X."/>
            <person name="Zhu S.C."/>
            <person name="Zhu X."/>
            <person name="Smith H.O."/>
            <person name="Gibbs R.A."/>
            <person name="Myers E.W."/>
            <person name="Rubin G.M."/>
            <person name="Venter J.C."/>
        </authorList>
    </citation>
    <scope>NUCLEOTIDE SEQUENCE [LARGE SCALE GENOMIC DNA]</scope>
    <source>
        <strain evidence="12">Berkeley</strain>
    </source>
</reference>
<reference evidence="12" key="2">
    <citation type="journal article" date="2002" name="Genome Biol.">
        <title>Annotation of the Drosophila melanogaster euchromatic genome: a systematic review.</title>
        <authorList>
            <person name="Misra S."/>
            <person name="Crosby M.A."/>
            <person name="Mungall C.J."/>
            <person name="Matthews B.B."/>
            <person name="Campbell K.S."/>
            <person name="Hradecky P."/>
            <person name="Huang Y."/>
            <person name="Kaminker J.S."/>
            <person name="Millburn G.H."/>
            <person name="Prochnik S.E."/>
            <person name="Smith C.D."/>
            <person name="Tupy J.L."/>
            <person name="Whitfield E.J."/>
            <person name="Bayraktaroglu L."/>
            <person name="Berman B.P."/>
            <person name="Bettencourt B.R."/>
            <person name="Celniker S.E."/>
            <person name="de Grey A.D.N.J."/>
            <person name="Drysdale R.A."/>
            <person name="Harris N.L."/>
            <person name="Richter J."/>
            <person name="Russo S."/>
            <person name="Schroeder A.J."/>
            <person name="Shu S.Q."/>
            <person name="Stapleton M."/>
            <person name="Yamada C."/>
            <person name="Ashburner M."/>
            <person name="Gelbart W.M."/>
            <person name="Rubin G.M."/>
            <person name="Lewis S.E."/>
        </authorList>
    </citation>
    <scope>GENOME REANNOTATION</scope>
    <source>
        <strain evidence="12">Berkeley</strain>
    </source>
</reference>
<reference evidence="10" key="3">
    <citation type="submission" date="2007-10" db="EMBL/GenBank/DDBJ databases">
        <authorList>
            <person name="Stapleton M."/>
            <person name="Carlson J."/>
            <person name="Frise E."/>
            <person name="Kapadia B."/>
            <person name="Park S."/>
            <person name="Wan K."/>
            <person name="Yu C."/>
            <person name="Celniker S."/>
        </authorList>
    </citation>
    <scope>NUCLEOTIDE SEQUENCE [LARGE SCALE MRNA]</scope>
</reference>
<reference evidence="9" key="4">
    <citation type="journal article" date="2006" name="Mol. Cell. Biol.">
        <title>The essential gene wda encodes a WD40 repeat subunit of Drosophila SAGA required for histone H3 acetylation.</title>
        <authorList>
            <person name="Guelman S."/>
            <person name="Suganuma T."/>
            <person name="Florens L."/>
            <person name="Weake V."/>
            <person name="Swanson S.K."/>
            <person name="Washburn M.P."/>
            <person name="Abmayr S.M."/>
            <person name="Workman J.L."/>
        </authorList>
    </citation>
    <scope>FUNCTION</scope>
    <scope>IDENTIFICATION IN SAGA COMPLEX</scope>
    <scope>IDENTIFICATION BY MASS SPECTROMETRY</scope>
</reference>
<reference evidence="9" key="5">
    <citation type="journal article" date="2009" name="Genes Dev.">
        <title>A novel histone fold domain-containing protein that replaces TAF6 in Drosophila SAGA is required for SAGA-dependent gene expression.</title>
        <authorList>
            <person name="Weake V.M."/>
            <person name="Swanson S.K."/>
            <person name="Mushegian A."/>
            <person name="Florens L."/>
            <person name="Washburn M.P."/>
            <person name="Abmayr S.M."/>
            <person name="Workman J.L."/>
        </authorList>
    </citation>
    <scope>FUNCTION</scope>
    <scope>IDENTIFICATION IN SAGA COMPLEX</scope>
    <scope>SUBCELLULAR LOCATION</scope>
    <scope>IDENTIFICATION BY MASS SPECTROMETRY</scope>
</reference>
<reference evidence="9" key="6">
    <citation type="journal article" date="2011" name="Genes Dev.">
        <title>Post-transcription initiation function of the ubiquitous SAGA complex in tissue-specific gene activation.</title>
        <authorList>
            <person name="Weake V.M."/>
            <person name="Dyer J.O."/>
            <person name="Seidel C."/>
            <person name="Box A."/>
            <person name="Swanson S.K."/>
            <person name="Peak A."/>
            <person name="Florens L."/>
            <person name="Washburn M.P."/>
            <person name="Abmayr S.M."/>
            <person name="Workman J.L."/>
        </authorList>
    </citation>
    <scope>FUNCTION</scope>
    <scope>IDENTIFICATION IN SAGA COMPLEX</scope>
    <scope>DEVELOPMENTAL STAGE</scope>
    <scope>IDENTIFICATION BY MASS SPECTROMETRY</scope>
</reference>
<reference evidence="9" key="7">
    <citation type="journal article" date="2014" name="Genes Dev.">
        <title>Loss of Drosophila Ataxin-7, a SAGA subunit, reduces H2B ubiquitination and leads to neural and retinal degeneration.</title>
        <authorList>
            <person name="Mohan R.D."/>
            <person name="Dialynas G."/>
            <person name="Weake V.M."/>
            <person name="Liu J."/>
            <person name="Martin-Brown S."/>
            <person name="Florens L."/>
            <person name="Washburn M.P."/>
            <person name="Workman J.L."/>
            <person name="Abmayr S.M."/>
        </authorList>
    </citation>
    <scope>FUNCTION</scope>
    <scope>IDENTIFICATION IN THE SAGA COMPLEX</scope>
    <scope>SUBCELLULAR LOCATION</scope>
    <scope>IDENTIFICATION BY MASS SPECTROMETRY</scope>
</reference>
<reference evidence="9" key="8">
    <citation type="journal article" date="2019" name="J. Cell Sci.">
        <title>The Drosophila Dbf4 ortholog Chiffon forms a complex with Gcn5 that is necessary for histone acetylation and viability.</title>
        <authorList>
            <person name="Torres-Zelada E.F."/>
            <person name="Stephenson R.E."/>
            <person name="Alpsoy A."/>
            <person name="Anderson B.D."/>
            <person name="Swanson S.K."/>
            <person name="Florens L."/>
            <person name="Dykhuizen E.C."/>
            <person name="Washburn M.P."/>
            <person name="Weake V.M."/>
        </authorList>
    </citation>
    <scope>FUNCTION</scope>
    <scope>IDENTIFICATION IN THE SAGA AND CHAT COMPLEXES</scope>
    <scope>IDENTIFICATION BY MASS SPECTROMETRY</scope>
</reference>
<gene>
    <name evidence="8 11" type="primary">Sgf29</name>
    <name evidence="11" type="ORF">CG30390</name>
</gene>
<accession>Q9W2I4</accession>
<comment type="function">
    <text evidence="3 4 5 6 7">Component of both the SAGA and CHAT histone acetyltransferase complexes, which both predominantly acetylate histone H3.</text>
</comment>
<comment type="subunit">
    <text evidence="3 4 5 6 7">Component of the Spt-Ada-Gcn5 acetyltransferase (SAGA) complex consisting of wda/Taf5L, Saf6, Taf9, Taf10b, Taf12, Ada1, Spt3, Spt7, Spt20, Sf3b3, Sf3b5, Nipped-A/Tra1, a histone acetyltransferase (HAT) module made up of Gcn5, Ada2b (Isoform B), Ada3 and Sgf29, and a deubiquitinase (DUB) module made up of not/nonstop, Sgf11, Atxn7 and e(y)2 (PubMed:16980620, PubMed:20008933, PubMed:21764853, PubMed:24493646, PubMed:30559249). Component of the Chiffon histone acetyltransferase (CHAT) complex consisting of Ada3, Sgf29, Gcn5, chif/chiffon and Ada2b (Isoform A) (PubMed:30559249).</text>
</comment>
<comment type="subcellular location">
    <subcellularLocation>
        <location evidence="4 6">Nucleus</location>
    </subcellularLocation>
</comment>
<comment type="developmental stage">
    <text evidence="5">Expressed in embryonic muscle and neuronal cells (at protein level).</text>
</comment>
<comment type="domain">
    <text evidence="2">The SGF29 tudor-like domain mediates binding to methylated 'Lys-4' of histone H3 (H3K4me).</text>
</comment>
<comment type="similarity">
    <text evidence="2">Belongs to the SGF29 family.</text>
</comment>
<proteinExistence type="evidence at protein level"/>
<sequence length="289" mass="32116">MPLTAESAAQQIQDRLKDIQQNIHNVDEERRRAENSIASLVRSLHATNQKVKPLLKASLTEAAQEEATIRAALAKIHEIRSIRNERRIQARNAGNKEAIRRGALMKMVQLSAQTLPLFVGKLGERAPALCGAIPAEGNYVAKVGDNVAALAKGIDEEENWILAEVVQFLHRQNKYDVIDIDEEQKDRHVLSKRKVIPLPLMRANPETDGHALFPKDTVVMALYPQTTCFYKAIVHRLPQTATEDYEVLFEDSSYTNGYAEPLPVAQRYVIAYRPTKKGAGSGSGNLSSA</sequence>
<name>SGF29_DROME</name>
<organism evidence="12">
    <name type="scientific">Drosophila melanogaster</name>
    <name type="common">Fruit fly</name>
    <dbReference type="NCBI Taxonomy" id="7227"/>
    <lineage>
        <taxon>Eukaryota</taxon>
        <taxon>Metazoa</taxon>
        <taxon>Ecdysozoa</taxon>
        <taxon>Arthropoda</taxon>
        <taxon>Hexapoda</taxon>
        <taxon>Insecta</taxon>
        <taxon>Pterygota</taxon>
        <taxon>Neoptera</taxon>
        <taxon>Endopterygota</taxon>
        <taxon>Diptera</taxon>
        <taxon>Brachycera</taxon>
        <taxon>Muscomorpha</taxon>
        <taxon>Ephydroidea</taxon>
        <taxon>Drosophilidae</taxon>
        <taxon>Drosophila</taxon>
        <taxon>Sophophora</taxon>
    </lineage>
</organism>
<keyword id="KW-0175">Coiled coil</keyword>
<keyword id="KW-0539">Nucleus</keyword>
<keyword id="KW-1185">Reference proteome</keyword>
<keyword id="KW-0804">Transcription</keyword>
<keyword id="KW-0805">Transcription regulation</keyword>
<dbReference type="EMBL" id="AE013599">
    <property type="protein sequence ID" value="AAF46707.2"/>
    <property type="molecule type" value="Genomic_DNA"/>
</dbReference>
<dbReference type="EMBL" id="AE013599">
    <property type="protein sequence ID" value="AHN56468.1"/>
    <property type="molecule type" value="Genomic_DNA"/>
</dbReference>
<dbReference type="EMBL" id="BT030796">
    <property type="protein sequence ID" value="ABV82178.1"/>
    <property type="molecule type" value="mRNA"/>
</dbReference>
<dbReference type="RefSeq" id="NP_001286673.1">
    <property type="nucleotide sequence ID" value="NM_001299744.1"/>
</dbReference>
<dbReference type="RefSeq" id="NP_726051.1">
    <property type="nucleotide sequence ID" value="NM_166436.3"/>
</dbReference>
<dbReference type="SMR" id="Q9W2I4"/>
<dbReference type="ComplexPortal" id="CPX-2644">
    <property type="entry name" value="SAGA complex"/>
</dbReference>
<dbReference type="ComplexPortal" id="CPX-2742">
    <property type="entry name" value="ATAC histone acetyltransferase complex"/>
</dbReference>
<dbReference type="ComplexPortal" id="CPX-2774">
    <property type="entry name" value="CHAT histone acetyltransferase complex"/>
</dbReference>
<dbReference type="ComplexPortal" id="CPX-2824">
    <property type="entry name" value="ADA complex"/>
</dbReference>
<dbReference type="FunCoup" id="Q9W2I4">
    <property type="interactions" value="573"/>
</dbReference>
<dbReference type="IntAct" id="Q9W2I4">
    <property type="interactions" value="8"/>
</dbReference>
<dbReference type="STRING" id="7227.FBpp0309689"/>
<dbReference type="PaxDb" id="7227-FBpp0071543"/>
<dbReference type="DNASU" id="37429"/>
<dbReference type="EnsemblMetazoa" id="FBtr0071617">
    <property type="protein sequence ID" value="FBpp0071543"/>
    <property type="gene ID" value="FBgn0050390"/>
</dbReference>
<dbReference type="EnsemblMetazoa" id="FBtr0342888">
    <property type="protein sequence ID" value="FBpp0309689"/>
    <property type="gene ID" value="FBgn0050390"/>
</dbReference>
<dbReference type="GeneID" id="37429"/>
<dbReference type="KEGG" id="dme:Dmel_CG30390"/>
<dbReference type="UCSC" id="CG30390-RA">
    <property type="organism name" value="d. melanogaster"/>
</dbReference>
<dbReference type="AGR" id="FB:FBgn0050390"/>
<dbReference type="CTD" id="112869"/>
<dbReference type="FlyBase" id="FBgn0050390">
    <property type="gene designation" value="Sgf29"/>
</dbReference>
<dbReference type="VEuPathDB" id="VectorBase:FBgn0050390"/>
<dbReference type="eggNOG" id="KOG3038">
    <property type="taxonomic scope" value="Eukaryota"/>
</dbReference>
<dbReference type="GeneTree" id="ENSGT00390000015229"/>
<dbReference type="HOGENOM" id="CLU_056816_0_0_1"/>
<dbReference type="InParanoid" id="Q9W2I4"/>
<dbReference type="OMA" id="EPTYIAK"/>
<dbReference type="OrthoDB" id="10265994at2759"/>
<dbReference type="BioGRID-ORCS" id="37429">
    <property type="hits" value="0 hits in 1 CRISPR screen"/>
</dbReference>
<dbReference type="Proteomes" id="UP000000803">
    <property type="component" value="Chromosome 2R"/>
</dbReference>
<dbReference type="Bgee" id="FBgn0050390">
    <property type="expression patterns" value="Expressed in medullary tangential neuron Mt1 (Drosophila) in brain and 72 other cell types or tissues"/>
</dbReference>
<dbReference type="ExpressionAtlas" id="Q9W2I4">
    <property type="expression patterns" value="baseline and differential"/>
</dbReference>
<dbReference type="GO" id="GO:0140672">
    <property type="term" value="C:ATAC complex"/>
    <property type="evidence" value="ECO:0000314"/>
    <property type="project" value="FlyBase"/>
</dbReference>
<dbReference type="GO" id="GO:0070775">
    <property type="term" value="C:H3 histone acetyltransferase complex"/>
    <property type="evidence" value="ECO:0000314"/>
    <property type="project" value="FlyBase"/>
</dbReference>
<dbReference type="GO" id="GO:0005634">
    <property type="term" value="C:nucleus"/>
    <property type="evidence" value="ECO:0000314"/>
    <property type="project" value="FlyBase"/>
</dbReference>
<dbReference type="GO" id="GO:0000124">
    <property type="term" value="C:SAGA complex"/>
    <property type="evidence" value="ECO:0000314"/>
    <property type="project" value="FlyBase"/>
</dbReference>
<dbReference type="GO" id="GO:0035064">
    <property type="term" value="F:methylated histone binding"/>
    <property type="evidence" value="ECO:0000250"/>
    <property type="project" value="FlyBase"/>
</dbReference>
<dbReference type="GO" id="GO:0006338">
    <property type="term" value="P:chromatin remodeling"/>
    <property type="evidence" value="ECO:0000314"/>
    <property type="project" value="FlyBase"/>
</dbReference>
<dbReference type="CDD" id="cd20393">
    <property type="entry name" value="Tudor_SGF29_rpt1"/>
    <property type="match status" value="1"/>
</dbReference>
<dbReference type="CDD" id="cd20394">
    <property type="entry name" value="Tudor_SGF29_rpt2"/>
    <property type="match status" value="1"/>
</dbReference>
<dbReference type="FunFam" id="2.30.30.140:FF:000026">
    <property type="entry name" value="SAGA-associated factor 29 homolog"/>
    <property type="match status" value="1"/>
</dbReference>
<dbReference type="FunFam" id="2.30.30.140:FF:000029">
    <property type="entry name" value="SAGA-associated factor 29 homolog"/>
    <property type="match status" value="1"/>
</dbReference>
<dbReference type="Gene3D" id="2.30.30.140">
    <property type="match status" value="2"/>
</dbReference>
<dbReference type="InterPro" id="IPR037802">
    <property type="entry name" value="SGF29"/>
</dbReference>
<dbReference type="InterPro" id="IPR010750">
    <property type="entry name" value="SGF29_tudor-like_dom"/>
</dbReference>
<dbReference type="InterPro" id="IPR047288">
    <property type="entry name" value="Tudor_SGF29_rpt1"/>
</dbReference>
<dbReference type="InterPro" id="IPR047287">
    <property type="entry name" value="Tudor_SGF29_rpt2"/>
</dbReference>
<dbReference type="PANTHER" id="PTHR21539">
    <property type="entry name" value="SAGA-ASSOCIATED FACTOR 29"/>
    <property type="match status" value="1"/>
</dbReference>
<dbReference type="PANTHER" id="PTHR21539:SF0">
    <property type="entry name" value="SAGA-ASSOCIATED FACTOR 29"/>
    <property type="match status" value="1"/>
</dbReference>
<dbReference type="Pfam" id="PF07039">
    <property type="entry name" value="SGF29_Tudor"/>
    <property type="match status" value="1"/>
</dbReference>
<dbReference type="PROSITE" id="PS51518">
    <property type="entry name" value="SGF29_C"/>
    <property type="match status" value="1"/>
</dbReference>
<evidence type="ECO:0000255" key="1"/>
<evidence type="ECO:0000255" key="2">
    <source>
        <dbReference type="PROSITE-ProRule" id="PRU00851"/>
    </source>
</evidence>
<evidence type="ECO:0000269" key="3">
    <source>
    </source>
</evidence>
<evidence type="ECO:0000269" key="4">
    <source>
    </source>
</evidence>
<evidence type="ECO:0000269" key="5">
    <source>
    </source>
</evidence>
<evidence type="ECO:0000269" key="6">
    <source>
    </source>
</evidence>
<evidence type="ECO:0000269" key="7">
    <source>
    </source>
</evidence>
<evidence type="ECO:0000303" key="8">
    <source>
    </source>
</evidence>
<evidence type="ECO:0000305" key="9"/>
<evidence type="ECO:0000312" key="10">
    <source>
        <dbReference type="EMBL" id="ABV82178.1"/>
    </source>
</evidence>
<evidence type="ECO:0000312" key="11">
    <source>
        <dbReference type="FlyBase" id="FBgn0050390"/>
    </source>
</evidence>
<evidence type="ECO:0000312" key="12">
    <source>
        <dbReference type="Proteomes" id="UP000000803"/>
    </source>
</evidence>
<feature type="chain" id="PRO_0000462576" description="SAGA-associated factor 29kDa">
    <location>
        <begin position="1"/>
        <end position="289"/>
    </location>
</feature>
<feature type="domain" description="SGF29 C-terminal" evidence="2">
    <location>
        <begin position="137"/>
        <end position="278"/>
    </location>
</feature>
<feature type="region of interest" description="Histone H3K4me3 N-terminus binding" evidence="2">
    <location>
        <begin position="179"/>
        <end position="181"/>
    </location>
</feature>
<feature type="region of interest" description="Histone H3K4me3 N-terminus binding" evidence="2">
    <location>
        <begin position="225"/>
        <end position="228"/>
    </location>
</feature>
<feature type="region of interest" description="Histone H3K4me3 binding" evidence="2">
    <location>
        <begin position="249"/>
        <end position="251"/>
    </location>
</feature>
<feature type="coiled-coil region" evidence="1">
    <location>
        <begin position="9"/>
        <end position="36"/>
    </location>
</feature>
<feature type="site" description="Histone H3K4me3 binding" evidence="2">
    <location>
        <position position="223"/>
    </location>
</feature>
<feature type="site" description="Histone H3K4me3 binding" evidence="2">
    <location>
        <position position="230"/>
    </location>
</feature>
<protein>
    <recommendedName>
        <fullName evidence="11">SAGA-associated factor 29kDa</fullName>
    </recommendedName>
    <alternativeName>
        <fullName evidence="9">SAGA complex subunit Sgf29</fullName>
    </alternativeName>
</protein>